<comment type="function">
    <text evidence="1">Catalyzes the conversion of N-formimidoyl-L-glutamate to L-glutamate and formamide.</text>
</comment>
<comment type="catalytic activity">
    <reaction evidence="1">
        <text>N-formimidoyl-L-glutamate + H2O = formamide + L-glutamate</text>
        <dbReference type="Rhea" id="RHEA:22492"/>
        <dbReference type="ChEBI" id="CHEBI:15377"/>
        <dbReference type="ChEBI" id="CHEBI:16397"/>
        <dbReference type="ChEBI" id="CHEBI:29985"/>
        <dbReference type="ChEBI" id="CHEBI:58928"/>
        <dbReference type="EC" id="3.5.3.8"/>
    </reaction>
</comment>
<comment type="cofactor">
    <cofactor evidence="1">
        <name>Mn(2+)</name>
        <dbReference type="ChEBI" id="CHEBI:29035"/>
    </cofactor>
    <text evidence="1">Binds 2 manganese ions per subunit.</text>
</comment>
<comment type="pathway">
    <text evidence="1">Amino-acid degradation; L-histidine degradation into L-glutamate; L-glutamate from N-formimidoyl-L-glutamate (hydrolase route): step 1/1.</text>
</comment>
<comment type="similarity">
    <text evidence="1">Belongs to the arginase family.</text>
</comment>
<organism>
    <name type="scientific">Aromatoleum aromaticum (strain DSM 19018 / LMG 30748 / EbN1)</name>
    <name type="common">Azoarcus sp. (strain EbN1)</name>
    <dbReference type="NCBI Taxonomy" id="76114"/>
    <lineage>
        <taxon>Bacteria</taxon>
        <taxon>Pseudomonadati</taxon>
        <taxon>Pseudomonadota</taxon>
        <taxon>Betaproteobacteria</taxon>
        <taxon>Rhodocyclales</taxon>
        <taxon>Rhodocyclaceae</taxon>
        <taxon>Aromatoleum</taxon>
    </lineage>
</organism>
<sequence length="341" mass="36573">MSHKDEEDRGPWHGRIDVHEGPRALRWHQCVKMLAPEAPPGIVLLGFPCDLGVRRNHGRAGAAEGPAALRRTLANLAWHGEWPVYDAGDAGDVGASTHDAGEQTLETMQGDYARRITALLEAGHVPIGLGGGHEIAWAAWQGFAVHAIREPHPPRIGILNVDAHFDLRTAPAGNSGTPFRQIAADCGVRDWNFRYCVLGIAEAANTAALFDRARALGVAFRLDEEMGARDLDATASTVRDFLAGIDWLYLTLCLDALSGACAPGVSAPATIGVEPAVVEAVIRIAVASGKLRLADVAELNPSLDPDGRTARLAARLVWRLAREIARRPCDVRSGLHLPARD</sequence>
<accession>Q5NZY1</accession>
<keyword id="KW-0369">Histidine metabolism</keyword>
<keyword id="KW-0378">Hydrolase</keyword>
<keyword id="KW-0464">Manganese</keyword>
<keyword id="KW-0479">Metal-binding</keyword>
<keyword id="KW-1185">Reference proteome</keyword>
<dbReference type="EC" id="3.5.3.8" evidence="1"/>
<dbReference type="EMBL" id="CR555306">
    <property type="protein sequence ID" value="CAI09383.1"/>
    <property type="molecule type" value="Genomic_DNA"/>
</dbReference>
<dbReference type="RefSeq" id="WP_011239048.1">
    <property type="nucleotide sequence ID" value="NC_006513.1"/>
</dbReference>
<dbReference type="SMR" id="Q5NZY1"/>
<dbReference type="STRING" id="76114.ebA5739"/>
<dbReference type="KEGG" id="eba:ebA5739"/>
<dbReference type="eggNOG" id="COG0010">
    <property type="taxonomic scope" value="Bacteria"/>
</dbReference>
<dbReference type="HOGENOM" id="CLU_039478_2_0_4"/>
<dbReference type="OrthoDB" id="9789727at2"/>
<dbReference type="UniPathway" id="UPA00379">
    <property type="reaction ID" value="UER00552"/>
</dbReference>
<dbReference type="Proteomes" id="UP000006552">
    <property type="component" value="Chromosome"/>
</dbReference>
<dbReference type="GO" id="GO:0008783">
    <property type="term" value="F:agmatinase activity"/>
    <property type="evidence" value="ECO:0007669"/>
    <property type="project" value="TreeGrafter"/>
</dbReference>
<dbReference type="GO" id="GO:0050415">
    <property type="term" value="F:formimidoylglutamase activity"/>
    <property type="evidence" value="ECO:0007669"/>
    <property type="project" value="UniProtKB-UniRule"/>
</dbReference>
<dbReference type="GO" id="GO:0030145">
    <property type="term" value="F:manganese ion binding"/>
    <property type="evidence" value="ECO:0007669"/>
    <property type="project" value="UniProtKB-UniRule"/>
</dbReference>
<dbReference type="GO" id="GO:0019556">
    <property type="term" value="P:L-histidine catabolic process to glutamate and formamide"/>
    <property type="evidence" value="ECO:0007669"/>
    <property type="project" value="UniProtKB-UniPathway"/>
</dbReference>
<dbReference type="GO" id="GO:0019557">
    <property type="term" value="P:L-histidine catabolic process to glutamate and formate"/>
    <property type="evidence" value="ECO:0007669"/>
    <property type="project" value="UniProtKB-UniPathway"/>
</dbReference>
<dbReference type="GO" id="GO:0033389">
    <property type="term" value="P:putrescine biosynthetic process from arginine, via agmatine"/>
    <property type="evidence" value="ECO:0007669"/>
    <property type="project" value="TreeGrafter"/>
</dbReference>
<dbReference type="CDD" id="cd09988">
    <property type="entry name" value="Formimidoylglutamase"/>
    <property type="match status" value="1"/>
</dbReference>
<dbReference type="Gene3D" id="3.40.800.10">
    <property type="entry name" value="Ureohydrolase domain"/>
    <property type="match status" value="1"/>
</dbReference>
<dbReference type="HAMAP" id="MF_00737">
    <property type="entry name" value="Formimidoylglutam"/>
    <property type="match status" value="1"/>
</dbReference>
<dbReference type="InterPro" id="IPR005923">
    <property type="entry name" value="HutG"/>
</dbReference>
<dbReference type="InterPro" id="IPR006035">
    <property type="entry name" value="Ureohydrolase"/>
</dbReference>
<dbReference type="InterPro" id="IPR023696">
    <property type="entry name" value="Ureohydrolase_dom_sf"/>
</dbReference>
<dbReference type="NCBIfam" id="TIGR01227">
    <property type="entry name" value="hutG"/>
    <property type="match status" value="1"/>
</dbReference>
<dbReference type="PANTHER" id="PTHR11358">
    <property type="entry name" value="ARGINASE/AGMATINASE"/>
    <property type="match status" value="1"/>
</dbReference>
<dbReference type="PANTHER" id="PTHR11358:SF35">
    <property type="entry name" value="FORMIMIDOYLGLUTAMASE"/>
    <property type="match status" value="1"/>
</dbReference>
<dbReference type="Pfam" id="PF00491">
    <property type="entry name" value="Arginase"/>
    <property type="match status" value="1"/>
</dbReference>
<dbReference type="PIRSF" id="PIRSF036979">
    <property type="entry name" value="Arginase"/>
    <property type="match status" value="1"/>
</dbReference>
<dbReference type="SUPFAM" id="SSF52768">
    <property type="entry name" value="Arginase/deacetylase"/>
    <property type="match status" value="1"/>
</dbReference>
<dbReference type="PROSITE" id="PS51409">
    <property type="entry name" value="ARGINASE_2"/>
    <property type="match status" value="1"/>
</dbReference>
<feature type="chain" id="PRO_0000258251" description="Formimidoylglutamase">
    <location>
        <begin position="1"/>
        <end position="341"/>
    </location>
</feature>
<feature type="binding site" evidence="1">
    <location>
        <position position="133"/>
    </location>
    <ligand>
        <name>Mn(2+)</name>
        <dbReference type="ChEBI" id="CHEBI:29035"/>
        <label>1</label>
    </ligand>
</feature>
<feature type="binding site" evidence="1">
    <location>
        <position position="162"/>
    </location>
    <ligand>
        <name>Mn(2+)</name>
        <dbReference type="ChEBI" id="CHEBI:29035"/>
        <label>1</label>
    </ligand>
</feature>
<feature type="binding site" evidence="1">
    <location>
        <position position="162"/>
    </location>
    <ligand>
        <name>Mn(2+)</name>
        <dbReference type="ChEBI" id="CHEBI:29035"/>
        <label>2</label>
    </ligand>
</feature>
<feature type="binding site" evidence="1">
    <location>
        <position position="164"/>
    </location>
    <ligand>
        <name>Mn(2+)</name>
        <dbReference type="ChEBI" id="CHEBI:29035"/>
        <label>2</label>
    </ligand>
</feature>
<feature type="binding site" evidence="1">
    <location>
        <position position="166"/>
    </location>
    <ligand>
        <name>Mn(2+)</name>
        <dbReference type="ChEBI" id="CHEBI:29035"/>
        <label>1</label>
    </ligand>
</feature>
<feature type="binding site" evidence="1">
    <location>
        <position position="253"/>
    </location>
    <ligand>
        <name>Mn(2+)</name>
        <dbReference type="ChEBI" id="CHEBI:29035"/>
        <label>1</label>
    </ligand>
</feature>
<feature type="binding site" evidence="1">
    <location>
        <position position="253"/>
    </location>
    <ligand>
        <name>Mn(2+)</name>
        <dbReference type="ChEBI" id="CHEBI:29035"/>
        <label>2</label>
    </ligand>
</feature>
<feature type="binding site" evidence="1">
    <location>
        <position position="255"/>
    </location>
    <ligand>
        <name>Mn(2+)</name>
        <dbReference type="ChEBI" id="CHEBI:29035"/>
        <label>2</label>
    </ligand>
</feature>
<evidence type="ECO:0000255" key="1">
    <source>
        <dbReference type="HAMAP-Rule" id="MF_00737"/>
    </source>
</evidence>
<name>HUTG_AROAE</name>
<proteinExistence type="inferred from homology"/>
<gene>
    <name evidence="1" type="primary">hutG</name>
    <name type="ordered locus">AZOSEA32580</name>
    <name type="ORF">ebA5739</name>
</gene>
<reference key="1">
    <citation type="journal article" date="2005" name="Arch. Microbiol.">
        <title>The genome sequence of an anaerobic aromatic-degrading denitrifying bacterium, strain EbN1.</title>
        <authorList>
            <person name="Rabus R."/>
            <person name="Kube M."/>
            <person name="Heider J."/>
            <person name="Beck A."/>
            <person name="Heitmann K."/>
            <person name="Widdel F."/>
            <person name="Reinhardt R."/>
        </authorList>
    </citation>
    <scope>NUCLEOTIDE SEQUENCE [LARGE SCALE GENOMIC DNA]</scope>
    <source>
        <strain>DSM 19018 / LMG 30748 / EbN1</strain>
    </source>
</reference>
<protein>
    <recommendedName>
        <fullName evidence="1">Formimidoylglutamase</fullName>
        <ecNumber evidence="1">3.5.3.8</ecNumber>
    </recommendedName>
    <alternativeName>
        <fullName evidence="1">Formiminoglutamase</fullName>
    </alternativeName>
    <alternativeName>
        <fullName evidence="1">Formiminoglutamate hydrolase</fullName>
    </alternativeName>
</protein>